<sequence>MKTSRLPIAIQQAVMRRLREKLAQANLKLGRNYPEPKLSYTQRGTSAGTAWLESYEIRLNPVLLLENSEAFIEEVVPHELAHLLVWKHFGRVAPHGKEWKWMMESVLGVPARRTHQFELQSVRRNTFPYRCKCQEHQLTVRRHNRVVRGEAVYRCVHCGEQLVAK</sequence>
<comment type="cofactor">
    <cofactor evidence="1">
        <name>Zn(2+)</name>
        <dbReference type="ChEBI" id="CHEBI:29105"/>
    </cofactor>
    <text evidence="1">Binds 1 zinc ion.</text>
</comment>
<comment type="subcellular location">
    <subcellularLocation>
        <location evidence="1">Cytoplasm</location>
    </subcellularLocation>
</comment>
<comment type="similarity">
    <text evidence="1">Belongs to the SprT family.</text>
</comment>
<name>SPRT_ECO45</name>
<dbReference type="EMBL" id="CU928161">
    <property type="protein sequence ID" value="CAR04461.1"/>
    <property type="molecule type" value="Genomic_DNA"/>
</dbReference>
<dbReference type="RefSeq" id="WP_000858396.1">
    <property type="nucleotide sequence ID" value="NC_011742.1"/>
</dbReference>
<dbReference type="SMR" id="B7MMD2"/>
<dbReference type="KEGG" id="ecz:ECS88_3226"/>
<dbReference type="HOGENOM" id="CLU_113336_0_1_6"/>
<dbReference type="Proteomes" id="UP000000747">
    <property type="component" value="Chromosome"/>
</dbReference>
<dbReference type="GO" id="GO:0005737">
    <property type="term" value="C:cytoplasm"/>
    <property type="evidence" value="ECO:0007669"/>
    <property type="project" value="UniProtKB-SubCell"/>
</dbReference>
<dbReference type="GO" id="GO:0008270">
    <property type="term" value="F:zinc ion binding"/>
    <property type="evidence" value="ECO:0007669"/>
    <property type="project" value="UniProtKB-UniRule"/>
</dbReference>
<dbReference type="GO" id="GO:0006950">
    <property type="term" value="P:response to stress"/>
    <property type="evidence" value="ECO:0007669"/>
    <property type="project" value="UniProtKB-ARBA"/>
</dbReference>
<dbReference type="Gene3D" id="3.30.2010.10">
    <property type="entry name" value="Metalloproteases ('zincins'), catalytic domain"/>
    <property type="match status" value="1"/>
</dbReference>
<dbReference type="HAMAP" id="MF_00746">
    <property type="entry name" value="SprT"/>
    <property type="match status" value="1"/>
</dbReference>
<dbReference type="InterPro" id="IPR006640">
    <property type="entry name" value="SprT-like_domain"/>
</dbReference>
<dbReference type="InterPro" id="IPR035240">
    <property type="entry name" value="SprT_Zn_ribbon"/>
</dbReference>
<dbReference type="InterPro" id="IPR023483">
    <property type="entry name" value="Uncharacterised_SprT"/>
</dbReference>
<dbReference type="NCBIfam" id="NF003421">
    <property type="entry name" value="PRK04860.1"/>
    <property type="match status" value="1"/>
</dbReference>
<dbReference type="PANTHER" id="PTHR38773">
    <property type="entry name" value="PROTEIN SPRT"/>
    <property type="match status" value="1"/>
</dbReference>
<dbReference type="PANTHER" id="PTHR38773:SF1">
    <property type="entry name" value="PROTEIN SPRT"/>
    <property type="match status" value="1"/>
</dbReference>
<dbReference type="Pfam" id="PF10263">
    <property type="entry name" value="SprT-like"/>
    <property type="match status" value="1"/>
</dbReference>
<dbReference type="Pfam" id="PF17283">
    <property type="entry name" value="Zn_ribbon_SprT"/>
    <property type="match status" value="1"/>
</dbReference>
<dbReference type="SMART" id="SM00731">
    <property type="entry name" value="SprT"/>
    <property type="match status" value="1"/>
</dbReference>
<dbReference type="PROSITE" id="PS00142">
    <property type="entry name" value="ZINC_PROTEASE"/>
    <property type="match status" value="1"/>
</dbReference>
<reference key="1">
    <citation type="journal article" date="2009" name="PLoS Genet.">
        <title>Organised genome dynamics in the Escherichia coli species results in highly diverse adaptive paths.</title>
        <authorList>
            <person name="Touchon M."/>
            <person name="Hoede C."/>
            <person name="Tenaillon O."/>
            <person name="Barbe V."/>
            <person name="Baeriswyl S."/>
            <person name="Bidet P."/>
            <person name="Bingen E."/>
            <person name="Bonacorsi S."/>
            <person name="Bouchier C."/>
            <person name="Bouvet O."/>
            <person name="Calteau A."/>
            <person name="Chiapello H."/>
            <person name="Clermont O."/>
            <person name="Cruveiller S."/>
            <person name="Danchin A."/>
            <person name="Diard M."/>
            <person name="Dossat C."/>
            <person name="Karoui M.E."/>
            <person name="Frapy E."/>
            <person name="Garry L."/>
            <person name="Ghigo J.M."/>
            <person name="Gilles A.M."/>
            <person name="Johnson J."/>
            <person name="Le Bouguenec C."/>
            <person name="Lescat M."/>
            <person name="Mangenot S."/>
            <person name="Martinez-Jehanne V."/>
            <person name="Matic I."/>
            <person name="Nassif X."/>
            <person name="Oztas S."/>
            <person name="Petit M.A."/>
            <person name="Pichon C."/>
            <person name="Rouy Z."/>
            <person name="Ruf C.S."/>
            <person name="Schneider D."/>
            <person name="Tourret J."/>
            <person name="Vacherie B."/>
            <person name="Vallenet D."/>
            <person name="Medigue C."/>
            <person name="Rocha E.P.C."/>
            <person name="Denamur E."/>
        </authorList>
    </citation>
    <scope>NUCLEOTIDE SEQUENCE [LARGE SCALE GENOMIC DNA]</scope>
    <source>
        <strain>S88 / ExPEC</strain>
    </source>
</reference>
<evidence type="ECO:0000255" key="1">
    <source>
        <dbReference type="HAMAP-Rule" id="MF_00746"/>
    </source>
</evidence>
<feature type="chain" id="PRO_1000133235" description="Protein SprT">
    <location>
        <begin position="1"/>
        <end position="165"/>
    </location>
</feature>
<feature type="domain" description="SprT-like" evidence="1">
    <location>
        <begin position="20"/>
        <end position="163"/>
    </location>
</feature>
<feature type="active site" evidence="1">
    <location>
        <position position="79"/>
    </location>
</feature>
<feature type="binding site" evidence="1">
    <location>
        <position position="78"/>
    </location>
    <ligand>
        <name>Zn(2+)</name>
        <dbReference type="ChEBI" id="CHEBI:29105"/>
    </ligand>
</feature>
<feature type="binding site" evidence="1">
    <location>
        <position position="82"/>
    </location>
    <ligand>
        <name>Zn(2+)</name>
        <dbReference type="ChEBI" id="CHEBI:29105"/>
    </ligand>
</feature>
<accession>B7MMD2</accession>
<organism>
    <name type="scientific">Escherichia coli O45:K1 (strain S88 / ExPEC)</name>
    <dbReference type="NCBI Taxonomy" id="585035"/>
    <lineage>
        <taxon>Bacteria</taxon>
        <taxon>Pseudomonadati</taxon>
        <taxon>Pseudomonadota</taxon>
        <taxon>Gammaproteobacteria</taxon>
        <taxon>Enterobacterales</taxon>
        <taxon>Enterobacteriaceae</taxon>
        <taxon>Escherichia</taxon>
    </lineage>
</organism>
<proteinExistence type="inferred from homology"/>
<protein>
    <recommendedName>
        <fullName evidence="1">Protein SprT</fullName>
    </recommendedName>
</protein>
<gene>
    <name evidence="1" type="primary">sprT</name>
    <name type="ordered locus">ECS88_3226</name>
</gene>
<keyword id="KW-0963">Cytoplasm</keyword>
<keyword id="KW-0479">Metal-binding</keyword>
<keyword id="KW-1185">Reference proteome</keyword>
<keyword id="KW-0862">Zinc</keyword>